<feature type="chain" id="PRO_0000386247" description="GTPase Obg">
    <location>
        <begin position="1"/>
        <end position="388"/>
    </location>
</feature>
<feature type="domain" description="Obg" evidence="2">
    <location>
        <begin position="1"/>
        <end position="159"/>
    </location>
</feature>
<feature type="domain" description="OBG-type G" evidence="1">
    <location>
        <begin position="160"/>
        <end position="333"/>
    </location>
</feature>
<feature type="binding site" evidence="1">
    <location>
        <begin position="166"/>
        <end position="173"/>
    </location>
    <ligand>
        <name>GTP</name>
        <dbReference type="ChEBI" id="CHEBI:37565"/>
    </ligand>
</feature>
<feature type="binding site" evidence="1">
    <location>
        <position position="173"/>
    </location>
    <ligand>
        <name>Mg(2+)</name>
        <dbReference type="ChEBI" id="CHEBI:18420"/>
    </ligand>
</feature>
<feature type="binding site" evidence="1">
    <location>
        <begin position="191"/>
        <end position="195"/>
    </location>
    <ligand>
        <name>GTP</name>
        <dbReference type="ChEBI" id="CHEBI:37565"/>
    </ligand>
</feature>
<feature type="binding site" evidence="1">
    <location>
        <position position="193"/>
    </location>
    <ligand>
        <name>Mg(2+)</name>
        <dbReference type="ChEBI" id="CHEBI:18420"/>
    </ligand>
</feature>
<feature type="binding site" evidence="1">
    <location>
        <begin position="213"/>
        <end position="216"/>
    </location>
    <ligand>
        <name>GTP</name>
        <dbReference type="ChEBI" id="CHEBI:37565"/>
    </ligand>
</feature>
<feature type="binding site" evidence="1">
    <location>
        <begin position="283"/>
        <end position="286"/>
    </location>
    <ligand>
        <name>GTP</name>
        <dbReference type="ChEBI" id="CHEBI:37565"/>
    </ligand>
</feature>
<feature type="binding site" evidence="1">
    <location>
        <begin position="314"/>
        <end position="316"/>
    </location>
    <ligand>
        <name>GTP</name>
        <dbReference type="ChEBI" id="CHEBI:37565"/>
    </ligand>
</feature>
<proteinExistence type="inferred from homology"/>
<reference key="1">
    <citation type="submission" date="2007-04" db="EMBL/GenBank/DDBJ databases">
        <title>Complete sequence of Shewanella putrefaciens CN-32.</title>
        <authorList>
            <consortium name="US DOE Joint Genome Institute"/>
            <person name="Copeland A."/>
            <person name="Lucas S."/>
            <person name="Lapidus A."/>
            <person name="Barry K."/>
            <person name="Detter J.C."/>
            <person name="Glavina del Rio T."/>
            <person name="Hammon N."/>
            <person name="Israni S."/>
            <person name="Dalin E."/>
            <person name="Tice H."/>
            <person name="Pitluck S."/>
            <person name="Chain P."/>
            <person name="Malfatti S."/>
            <person name="Shin M."/>
            <person name="Vergez L."/>
            <person name="Schmutz J."/>
            <person name="Larimer F."/>
            <person name="Land M."/>
            <person name="Hauser L."/>
            <person name="Kyrpides N."/>
            <person name="Mikhailova N."/>
            <person name="Romine M.F."/>
            <person name="Fredrickson J."/>
            <person name="Tiedje J."/>
            <person name="Richardson P."/>
        </authorList>
    </citation>
    <scope>NUCLEOTIDE SEQUENCE [LARGE SCALE GENOMIC DNA]</scope>
    <source>
        <strain>CN-32 / ATCC BAA-453</strain>
    </source>
</reference>
<comment type="function">
    <text evidence="1">An essential GTPase which binds GTP, GDP and possibly (p)ppGpp with moderate affinity, with high nucleotide exchange rates and a fairly low GTP hydrolysis rate. Plays a role in control of the cell cycle, stress response, ribosome biogenesis and in those bacteria that undergo differentiation, in morphogenesis control.</text>
</comment>
<comment type="cofactor">
    <cofactor evidence="1">
        <name>Mg(2+)</name>
        <dbReference type="ChEBI" id="CHEBI:18420"/>
    </cofactor>
</comment>
<comment type="subunit">
    <text evidence="1">Monomer.</text>
</comment>
<comment type="subcellular location">
    <subcellularLocation>
        <location evidence="1">Cytoplasm</location>
    </subcellularLocation>
</comment>
<comment type="similarity">
    <text evidence="1">Belongs to the TRAFAC class OBG-HflX-like GTPase superfamily. OBG GTPase family.</text>
</comment>
<sequence>MKFVDEAVIRVEAGDGGSGCVSFRREKYVPDGGPDGGDGGDGGSVYLQADENFNTLIEFRFERFHMAERGENGRGRDCTGHSGKDLILKVPVGTRAIDHDTEEVLGDLTTHGQKLLVAKGGFHGLGNTRFKSSTNRAPRQKTLGTPGEVRSLKLELLLLADVGLLGMPNAGKSTFIRAVSRATPKVADYPFTTLVPNLGVVNPRPGQSFVIADIPGLIEGAAEGAGLGIRFLKHLERCRILLHIIDIEPIDGTDPVESARAIVGELEKYSPKLASKPRWLVFNKTDLLLEEELQEKVERIVKELEWEGDVYTISAYNREGTKELALKLLDYIASLPPEDNVVNPDDEVEFKWDNYHQANLDSVNEDYDDDFDDDFDDDDYDVEVIYQR</sequence>
<name>OBG_SHEPC</name>
<gene>
    <name evidence="1" type="primary">obg</name>
    <name type="ordered locus">Sputcn32_0981</name>
</gene>
<accession>A4Y427</accession>
<organism>
    <name type="scientific">Shewanella putrefaciens (strain CN-32 / ATCC BAA-453)</name>
    <dbReference type="NCBI Taxonomy" id="319224"/>
    <lineage>
        <taxon>Bacteria</taxon>
        <taxon>Pseudomonadati</taxon>
        <taxon>Pseudomonadota</taxon>
        <taxon>Gammaproteobacteria</taxon>
        <taxon>Alteromonadales</taxon>
        <taxon>Shewanellaceae</taxon>
        <taxon>Shewanella</taxon>
    </lineage>
</organism>
<protein>
    <recommendedName>
        <fullName evidence="1">GTPase Obg</fullName>
        <ecNumber evidence="1">3.6.5.-</ecNumber>
    </recommendedName>
    <alternativeName>
        <fullName evidence="1">GTP-binding protein Obg</fullName>
    </alternativeName>
</protein>
<evidence type="ECO:0000255" key="1">
    <source>
        <dbReference type="HAMAP-Rule" id="MF_01454"/>
    </source>
</evidence>
<evidence type="ECO:0000255" key="2">
    <source>
        <dbReference type="PROSITE-ProRule" id="PRU01231"/>
    </source>
</evidence>
<dbReference type="EC" id="3.6.5.-" evidence="1"/>
<dbReference type="EMBL" id="CP000681">
    <property type="protein sequence ID" value="ABP74710.1"/>
    <property type="molecule type" value="Genomic_DNA"/>
</dbReference>
<dbReference type="SMR" id="A4Y427"/>
<dbReference type="STRING" id="319224.Sputcn32_0981"/>
<dbReference type="KEGG" id="spc:Sputcn32_0981"/>
<dbReference type="eggNOG" id="COG0536">
    <property type="taxonomic scope" value="Bacteria"/>
</dbReference>
<dbReference type="HOGENOM" id="CLU_011747_2_0_6"/>
<dbReference type="GO" id="GO:0005737">
    <property type="term" value="C:cytoplasm"/>
    <property type="evidence" value="ECO:0007669"/>
    <property type="project" value="UniProtKB-SubCell"/>
</dbReference>
<dbReference type="GO" id="GO:0005525">
    <property type="term" value="F:GTP binding"/>
    <property type="evidence" value="ECO:0007669"/>
    <property type="project" value="UniProtKB-UniRule"/>
</dbReference>
<dbReference type="GO" id="GO:0003924">
    <property type="term" value="F:GTPase activity"/>
    <property type="evidence" value="ECO:0007669"/>
    <property type="project" value="UniProtKB-UniRule"/>
</dbReference>
<dbReference type="GO" id="GO:0000287">
    <property type="term" value="F:magnesium ion binding"/>
    <property type="evidence" value="ECO:0007669"/>
    <property type="project" value="InterPro"/>
</dbReference>
<dbReference type="GO" id="GO:0042254">
    <property type="term" value="P:ribosome biogenesis"/>
    <property type="evidence" value="ECO:0007669"/>
    <property type="project" value="UniProtKB-UniRule"/>
</dbReference>
<dbReference type="CDD" id="cd01898">
    <property type="entry name" value="Obg"/>
    <property type="match status" value="1"/>
</dbReference>
<dbReference type="FunFam" id="2.70.210.12:FF:000001">
    <property type="entry name" value="GTPase Obg"/>
    <property type="match status" value="1"/>
</dbReference>
<dbReference type="Gene3D" id="2.70.210.12">
    <property type="entry name" value="GTP1/OBG domain"/>
    <property type="match status" value="1"/>
</dbReference>
<dbReference type="Gene3D" id="3.40.50.300">
    <property type="entry name" value="P-loop containing nucleotide triphosphate hydrolases"/>
    <property type="match status" value="1"/>
</dbReference>
<dbReference type="HAMAP" id="MF_01454">
    <property type="entry name" value="GTPase_Obg"/>
    <property type="match status" value="1"/>
</dbReference>
<dbReference type="InterPro" id="IPR031167">
    <property type="entry name" value="G_OBG"/>
</dbReference>
<dbReference type="InterPro" id="IPR006073">
    <property type="entry name" value="GTP-bd"/>
</dbReference>
<dbReference type="InterPro" id="IPR014100">
    <property type="entry name" value="GTP-bd_Obg/CgtA"/>
</dbReference>
<dbReference type="InterPro" id="IPR006074">
    <property type="entry name" value="GTP1-OBG_CS"/>
</dbReference>
<dbReference type="InterPro" id="IPR006169">
    <property type="entry name" value="GTP1_OBG_dom"/>
</dbReference>
<dbReference type="InterPro" id="IPR036726">
    <property type="entry name" value="GTP1_OBG_dom_sf"/>
</dbReference>
<dbReference type="InterPro" id="IPR045086">
    <property type="entry name" value="OBG_GTPase"/>
</dbReference>
<dbReference type="InterPro" id="IPR027417">
    <property type="entry name" value="P-loop_NTPase"/>
</dbReference>
<dbReference type="NCBIfam" id="TIGR02729">
    <property type="entry name" value="Obg_CgtA"/>
    <property type="match status" value="1"/>
</dbReference>
<dbReference type="NCBIfam" id="NF008955">
    <property type="entry name" value="PRK12297.1"/>
    <property type="match status" value="1"/>
</dbReference>
<dbReference type="NCBIfam" id="NF008956">
    <property type="entry name" value="PRK12299.1"/>
    <property type="match status" value="1"/>
</dbReference>
<dbReference type="PANTHER" id="PTHR11702">
    <property type="entry name" value="DEVELOPMENTALLY REGULATED GTP-BINDING PROTEIN-RELATED"/>
    <property type="match status" value="1"/>
</dbReference>
<dbReference type="PANTHER" id="PTHR11702:SF31">
    <property type="entry name" value="MITOCHONDRIAL RIBOSOME-ASSOCIATED GTPASE 2"/>
    <property type="match status" value="1"/>
</dbReference>
<dbReference type="Pfam" id="PF01018">
    <property type="entry name" value="GTP1_OBG"/>
    <property type="match status" value="1"/>
</dbReference>
<dbReference type="Pfam" id="PF01926">
    <property type="entry name" value="MMR_HSR1"/>
    <property type="match status" value="1"/>
</dbReference>
<dbReference type="PIRSF" id="PIRSF002401">
    <property type="entry name" value="GTP_bd_Obg/CgtA"/>
    <property type="match status" value="1"/>
</dbReference>
<dbReference type="PRINTS" id="PR00326">
    <property type="entry name" value="GTP1OBG"/>
</dbReference>
<dbReference type="SUPFAM" id="SSF82051">
    <property type="entry name" value="Obg GTP-binding protein N-terminal domain"/>
    <property type="match status" value="1"/>
</dbReference>
<dbReference type="SUPFAM" id="SSF52540">
    <property type="entry name" value="P-loop containing nucleoside triphosphate hydrolases"/>
    <property type="match status" value="1"/>
</dbReference>
<dbReference type="PROSITE" id="PS51710">
    <property type="entry name" value="G_OBG"/>
    <property type="match status" value="1"/>
</dbReference>
<dbReference type="PROSITE" id="PS00905">
    <property type="entry name" value="GTP1_OBG"/>
    <property type="match status" value="1"/>
</dbReference>
<dbReference type="PROSITE" id="PS51883">
    <property type="entry name" value="OBG"/>
    <property type="match status" value="1"/>
</dbReference>
<keyword id="KW-0963">Cytoplasm</keyword>
<keyword id="KW-0342">GTP-binding</keyword>
<keyword id="KW-0378">Hydrolase</keyword>
<keyword id="KW-0460">Magnesium</keyword>
<keyword id="KW-0479">Metal-binding</keyword>
<keyword id="KW-0547">Nucleotide-binding</keyword>